<evidence type="ECO:0000255" key="1">
    <source>
        <dbReference type="HAMAP-Rule" id="MF_01365"/>
    </source>
</evidence>
<evidence type="ECO:0000305" key="2"/>
<feature type="chain" id="PRO_0000260904" description="Large ribosomal subunit protein uL6">
    <location>
        <begin position="1"/>
        <end position="178"/>
    </location>
</feature>
<comment type="function">
    <text evidence="1">This protein binds to the 23S rRNA, and is important in its secondary structure. It is located near the subunit interface in the base of the L7/L12 stalk, and near the tRNA binding site of the peptidyltransferase center.</text>
</comment>
<comment type="subunit">
    <text evidence="1">Part of the 50S ribosomal subunit.</text>
</comment>
<comment type="similarity">
    <text evidence="1">Belongs to the universal ribosomal protein uL6 family.</text>
</comment>
<accession>Q3J8S9</accession>
<dbReference type="EMBL" id="CP000127">
    <property type="protein sequence ID" value="ABA58767.1"/>
    <property type="molecule type" value="Genomic_DNA"/>
</dbReference>
<dbReference type="RefSeq" id="WP_011330918.1">
    <property type="nucleotide sequence ID" value="NC_007484.1"/>
</dbReference>
<dbReference type="SMR" id="Q3J8S9"/>
<dbReference type="FunCoup" id="Q3J8S9">
    <property type="interactions" value="669"/>
</dbReference>
<dbReference type="STRING" id="323261.Noc_2309"/>
<dbReference type="KEGG" id="noc:Noc_2309"/>
<dbReference type="eggNOG" id="COG0097">
    <property type="taxonomic scope" value="Bacteria"/>
</dbReference>
<dbReference type="HOGENOM" id="CLU_065464_1_2_6"/>
<dbReference type="InParanoid" id="Q3J8S9"/>
<dbReference type="Proteomes" id="UP000006838">
    <property type="component" value="Chromosome"/>
</dbReference>
<dbReference type="GO" id="GO:0022625">
    <property type="term" value="C:cytosolic large ribosomal subunit"/>
    <property type="evidence" value="ECO:0007669"/>
    <property type="project" value="TreeGrafter"/>
</dbReference>
<dbReference type="GO" id="GO:0019843">
    <property type="term" value="F:rRNA binding"/>
    <property type="evidence" value="ECO:0007669"/>
    <property type="project" value="UniProtKB-UniRule"/>
</dbReference>
<dbReference type="GO" id="GO:0003735">
    <property type="term" value="F:structural constituent of ribosome"/>
    <property type="evidence" value="ECO:0007669"/>
    <property type="project" value="InterPro"/>
</dbReference>
<dbReference type="GO" id="GO:0002181">
    <property type="term" value="P:cytoplasmic translation"/>
    <property type="evidence" value="ECO:0007669"/>
    <property type="project" value="TreeGrafter"/>
</dbReference>
<dbReference type="FunFam" id="3.90.930.12:FF:000001">
    <property type="entry name" value="50S ribosomal protein L6"/>
    <property type="match status" value="1"/>
</dbReference>
<dbReference type="FunFam" id="3.90.930.12:FF:000002">
    <property type="entry name" value="50S ribosomal protein L6"/>
    <property type="match status" value="1"/>
</dbReference>
<dbReference type="Gene3D" id="3.90.930.12">
    <property type="entry name" value="Ribosomal protein L6, alpha-beta domain"/>
    <property type="match status" value="2"/>
</dbReference>
<dbReference type="HAMAP" id="MF_01365_B">
    <property type="entry name" value="Ribosomal_uL6_B"/>
    <property type="match status" value="1"/>
</dbReference>
<dbReference type="InterPro" id="IPR000702">
    <property type="entry name" value="Ribosomal_uL6-like"/>
</dbReference>
<dbReference type="InterPro" id="IPR036789">
    <property type="entry name" value="Ribosomal_uL6-like_a/b-dom_sf"/>
</dbReference>
<dbReference type="InterPro" id="IPR020040">
    <property type="entry name" value="Ribosomal_uL6_a/b-dom"/>
</dbReference>
<dbReference type="InterPro" id="IPR019906">
    <property type="entry name" value="Ribosomal_uL6_bac-type"/>
</dbReference>
<dbReference type="InterPro" id="IPR002358">
    <property type="entry name" value="Ribosomal_uL6_CS"/>
</dbReference>
<dbReference type="NCBIfam" id="TIGR03654">
    <property type="entry name" value="L6_bact"/>
    <property type="match status" value="1"/>
</dbReference>
<dbReference type="PANTHER" id="PTHR11655">
    <property type="entry name" value="60S/50S RIBOSOMAL PROTEIN L6/L9"/>
    <property type="match status" value="1"/>
</dbReference>
<dbReference type="PANTHER" id="PTHR11655:SF14">
    <property type="entry name" value="LARGE RIBOSOMAL SUBUNIT PROTEIN UL6M"/>
    <property type="match status" value="1"/>
</dbReference>
<dbReference type="Pfam" id="PF00347">
    <property type="entry name" value="Ribosomal_L6"/>
    <property type="match status" value="2"/>
</dbReference>
<dbReference type="PIRSF" id="PIRSF002162">
    <property type="entry name" value="Ribosomal_L6"/>
    <property type="match status" value="1"/>
</dbReference>
<dbReference type="PRINTS" id="PR00059">
    <property type="entry name" value="RIBOSOMALL6"/>
</dbReference>
<dbReference type="SUPFAM" id="SSF56053">
    <property type="entry name" value="Ribosomal protein L6"/>
    <property type="match status" value="2"/>
</dbReference>
<dbReference type="PROSITE" id="PS00525">
    <property type="entry name" value="RIBOSOMAL_L6_1"/>
    <property type="match status" value="1"/>
</dbReference>
<proteinExistence type="inferred from homology"/>
<gene>
    <name evidence="1" type="primary">rplF</name>
    <name type="ordered locus">Noc_2309</name>
</gene>
<keyword id="KW-1185">Reference proteome</keyword>
<keyword id="KW-0687">Ribonucleoprotein</keyword>
<keyword id="KW-0689">Ribosomal protein</keyword>
<keyword id="KW-0694">RNA-binding</keyword>
<keyword id="KW-0699">rRNA-binding</keyword>
<sequence length="178" mass="19479">MSRIADNPVSIPKGVEVTLSGDNDIKVKGAKGSLAFAIHPLIQVVQDGETLRFSAKSTDKRVNALRGTTRALINNMVQGVSQGFERRLQLVGVGYRAQLQGRKLVLSLGYSHPVEFTAPEGLTIEVPSPTEIIVKGYDKQQVGQAAANIRRFRPPEPYKGKGVRYADEVVVRKEAKKK</sequence>
<organism>
    <name type="scientific">Nitrosococcus oceani (strain ATCC 19707 / BCRC 17464 / JCM 30415 / NCIMB 11848 / C-107)</name>
    <dbReference type="NCBI Taxonomy" id="323261"/>
    <lineage>
        <taxon>Bacteria</taxon>
        <taxon>Pseudomonadati</taxon>
        <taxon>Pseudomonadota</taxon>
        <taxon>Gammaproteobacteria</taxon>
        <taxon>Chromatiales</taxon>
        <taxon>Chromatiaceae</taxon>
        <taxon>Nitrosococcus</taxon>
    </lineage>
</organism>
<reference key="1">
    <citation type="journal article" date="2006" name="Appl. Environ. Microbiol.">
        <title>Complete genome sequence of the marine, chemolithoautotrophic, ammonia-oxidizing bacterium Nitrosococcus oceani ATCC 19707.</title>
        <authorList>
            <person name="Klotz M.G."/>
            <person name="Arp D.J."/>
            <person name="Chain P.S.G."/>
            <person name="El-Sheikh A.F."/>
            <person name="Hauser L.J."/>
            <person name="Hommes N.G."/>
            <person name="Larimer F.W."/>
            <person name="Malfatti S.A."/>
            <person name="Norton J.M."/>
            <person name="Poret-Peterson A.T."/>
            <person name="Vergez L.M."/>
            <person name="Ward B.B."/>
        </authorList>
    </citation>
    <scope>NUCLEOTIDE SEQUENCE [LARGE SCALE GENOMIC DNA]</scope>
    <source>
        <strain>ATCC 19707 / BCRC 17464 / JCM 30415 / NCIMB 11848 / C-107</strain>
    </source>
</reference>
<protein>
    <recommendedName>
        <fullName evidence="1">Large ribosomal subunit protein uL6</fullName>
    </recommendedName>
    <alternativeName>
        <fullName evidence="2">50S ribosomal protein L6</fullName>
    </alternativeName>
</protein>
<name>RL6_NITOC</name>